<gene>
    <name evidence="1" type="primary">rppH</name>
    <name evidence="1" type="synonym">nudH</name>
    <name type="ordered locus">azo2764</name>
</gene>
<reference key="1">
    <citation type="journal article" date="2006" name="Nat. Biotechnol.">
        <title>Complete genome of the mutualistic, N2-fixing grass endophyte Azoarcus sp. strain BH72.</title>
        <authorList>
            <person name="Krause A."/>
            <person name="Ramakumar A."/>
            <person name="Bartels D."/>
            <person name="Battistoni F."/>
            <person name="Bekel T."/>
            <person name="Boch J."/>
            <person name="Boehm M."/>
            <person name="Friedrich F."/>
            <person name="Hurek T."/>
            <person name="Krause L."/>
            <person name="Linke B."/>
            <person name="McHardy A.C."/>
            <person name="Sarkar A."/>
            <person name="Schneiker S."/>
            <person name="Syed A.A."/>
            <person name="Thauer R."/>
            <person name="Vorhoelter F.-J."/>
            <person name="Weidner S."/>
            <person name="Puehler A."/>
            <person name="Reinhold-Hurek B."/>
            <person name="Kaiser O."/>
            <person name="Goesmann A."/>
        </authorList>
    </citation>
    <scope>NUCLEOTIDE SEQUENCE [LARGE SCALE GENOMIC DNA]</scope>
    <source>
        <strain>BH72</strain>
    </source>
</reference>
<organism>
    <name type="scientific">Azoarcus sp. (strain BH72)</name>
    <dbReference type="NCBI Taxonomy" id="418699"/>
    <lineage>
        <taxon>Bacteria</taxon>
        <taxon>Pseudomonadati</taxon>
        <taxon>Pseudomonadota</taxon>
        <taxon>Betaproteobacteria</taxon>
        <taxon>Rhodocyclales</taxon>
        <taxon>Zoogloeaceae</taxon>
        <taxon>Azoarcus</taxon>
    </lineage>
</organism>
<name>RPPH_AZOSB</name>
<feature type="chain" id="PRO_1000021927" description="RNA pyrophosphohydrolase">
    <location>
        <begin position="1"/>
        <end position="175"/>
    </location>
</feature>
<feature type="domain" description="Nudix hydrolase" evidence="1">
    <location>
        <begin position="6"/>
        <end position="149"/>
    </location>
</feature>
<feature type="short sequence motif" description="Nudix box">
    <location>
        <begin position="38"/>
        <end position="59"/>
    </location>
</feature>
<proteinExistence type="inferred from homology"/>
<evidence type="ECO:0000255" key="1">
    <source>
        <dbReference type="HAMAP-Rule" id="MF_00298"/>
    </source>
</evidence>
<dbReference type="EC" id="3.6.1.-" evidence="1"/>
<dbReference type="EMBL" id="AM406670">
    <property type="protein sequence ID" value="CAL95380.1"/>
    <property type="molecule type" value="Genomic_DNA"/>
</dbReference>
<dbReference type="RefSeq" id="WP_011766490.1">
    <property type="nucleotide sequence ID" value="NC_008702.1"/>
</dbReference>
<dbReference type="SMR" id="A1K975"/>
<dbReference type="STRING" id="62928.azo2764"/>
<dbReference type="KEGG" id="aoa:dqs_2899"/>
<dbReference type="KEGG" id="azo:azo2764"/>
<dbReference type="eggNOG" id="COG0494">
    <property type="taxonomic scope" value="Bacteria"/>
</dbReference>
<dbReference type="HOGENOM" id="CLU_087195_3_1_4"/>
<dbReference type="OrthoDB" id="9816040at2"/>
<dbReference type="Proteomes" id="UP000002588">
    <property type="component" value="Chromosome"/>
</dbReference>
<dbReference type="GO" id="GO:0005737">
    <property type="term" value="C:cytoplasm"/>
    <property type="evidence" value="ECO:0007669"/>
    <property type="project" value="TreeGrafter"/>
</dbReference>
<dbReference type="GO" id="GO:0034353">
    <property type="term" value="F:mRNA 5'-diphosphatase activity"/>
    <property type="evidence" value="ECO:0007669"/>
    <property type="project" value="TreeGrafter"/>
</dbReference>
<dbReference type="GO" id="GO:0006402">
    <property type="term" value="P:mRNA catabolic process"/>
    <property type="evidence" value="ECO:0007669"/>
    <property type="project" value="TreeGrafter"/>
</dbReference>
<dbReference type="CDD" id="cd03671">
    <property type="entry name" value="NUDIX_Ap4A_hydrolase_plant_like"/>
    <property type="match status" value="1"/>
</dbReference>
<dbReference type="FunFam" id="3.90.79.10:FF:000001">
    <property type="entry name" value="RNA pyrophosphohydrolase"/>
    <property type="match status" value="1"/>
</dbReference>
<dbReference type="Gene3D" id="3.90.79.10">
    <property type="entry name" value="Nucleoside Triphosphate Pyrophosphohydrolase"/>
    <property type="match status" value="1"/>
</dbReference>
<dbReference type="HAMAP" id="MF_00298">
    <property type="entry name" value="Nudix_RppH"/>
    <property type="match status" value="1"/>
</dbReference>
<dbReference type="InterPro" id="IPR020476">
    <property type="entry name" value="Nudix_hydrolase"/>
</dbReference>
<dbReference type="InterPro" id="IPR015797">
    <property type="entry name" value="NUDIX_hydrolase-like_dom_sf"/>
</dbReference>
<dbReference type="InterPro" id="IPR020084">
    <property type="entry name" value="NUDIX_hydrolase_CS"/>
</dbReference>
<dbReference type="InterPro" id="IPR000086">
    <property type="entry name" value="NUDIX_hydrolase_dom"/>
</dbReference>
<dbReference type="InterPro" id="IPR022927">
    <property type="entry name" value="RppH"/>
</dbReference>
<dbReference type="NCBIfam" id="NF001935">
    <property type="entry name" value="PRK00714.1-2"/>
    <property type="match status" value="1"/>
</dbReference>
<dbReference type="NCBIfam" id="NF001937">
    <property type="entry name" value="PRK00714.1-4"/>
    <property type="match status" value="1"/>
</dbReference>
<dbReference type="NCBIfam" id="NF001938">
    <property type="entry name" value="PRK00714.1-5"/>
    <property type="match status" value="1"/>
</dbReference>
<dbReference type="PANTHER" id="PTHR23114">
    <property type="entry name" value="M7GPPPN-MRNA HYDROLASE"/>
    <property type="match status" value="1"/>
</dbReference>
<dbReference type="PANTHER" id="PTHR23114:SF17">
    <property type="entry name" value="M7GPPPN-MRNA HYDROLASE"/>
    <property type="match status" value="1"/>
</dbReference>
<dbReference type="Pfam" id="PF00293">
    <property type="entry name" value="NUDIX"/>
    <property type="match status" value="1"/>
</dbReference>
<dbReference type="PRINTS" id="PR00502">
    <property type="entry name" value="NUDIXFAMILY"/>
</dbReference>
<dbReference type="SUPFAM" id="SSF55811">
    <property type="entry name" value="Nudix"/>
    <property type="match status" value="1"/>
</dbReference>
<dbReference type="PROSITE" id="PS51462">
    <property type="entry name" value="NUDIX"/>
    <property type="match status" value="1"/>
</dbReference>
<dbReference type="PROSITE" id="PS00893">
    <property type="entry name" value="NUDIX_BOX"/>
    <property type="match status" value="1"/>
</dbReference>
<keyword id="KW-0378">Hydrolase</keyword>
<keyword id="KW-1185">Reference proteome</keyword>
<protein>
    <recommendedName>
        <fullName evidence="1">RNA pyrophosphohydrolase</fullName>
        <ecNumber evidence="1">3.6.1.-</ecNumber>
    </recommendedName>
    <alternativeName>
        <fullName evidence="1">(Di)nucleoside polyphosphate hydrolase</fullName>
    </alternativeName>
</protein>
<sequence>MLDREGYRPNVGIILVNARNEVFWGKRIREHSWQFPQGGIKHGESPEQAMYRELYEEVGLRPEHVKILGRTRGWLRYDVPKHWIRREWRNTYRGQKQIWYLLRLVGRDTDVCLRASTHPEFDAWRWSEYWVPLEAVIEFKRQVYQQALTELSRLLFRSKPAELPEGYRQGTASQA</sequence>
<accession>A1K975</accession>
<comment type="function">
    <text evidence="1">Accelerates the degradation of transcripts by removing pyrophosphate from the 5'-end of triphosphorylated RNA, leading to a more labile monophosphorylated state that can stimulate subsequent ribonuclease cleavage.</text>
</comment>
<comment type="cofactor">
    <cofactor evidence="1">
        <name>a divalent metal cation</name>
        <dbReference type="ChEBI" id="CHEBI:60240"/>
    </cofactor>
</comment>
<comment type="similarity">
    <text evidence="1">Belongs to the Nudix hydrolase family. RppH subfamily.</text>
</comment>